<dbReference type="EMBL" id="AAFI02000179">
    <property type="protein sequence ID" value="EDR41021.1"/>
    <property type="molecule type" value="Genomic_DNA"/>
</dbReference>
<dbReference type="RefSeq" id="XP_001733048.1">
    <property type="nucleotide sequence ID" value="XM_001732996.1"/>
</dbReference>
<dbReference type="SMR" id="B0G185"/>
<dbReference type="FunCoup" id="B0G185">
    <property type="interactions" value="726"/>
</dbReference>
<dbReference type="STRING" id="44689.B0G185"/>
<dbReference type="PaxDb" id="44689-DDB0252557"/>
<dbReference type="EnsemblProtists" id="EDR41021">
    <property type="protein sequence ID" value="EDR41021"/>
    <property type="gene ID" value="DDB_G0295711"/>
</dbReference>
<dbReference type="GeneID" id="8628284"/>
<dbReference type="KEGG" id="ddi:DDB_G0295711"/>
<dbReference type="dictyBase" id="DDB_G0295711">
    <property type="gene designation" value="ap1s2"/>
</dbReference>
<dbReference type="VEuPathDB" id="AmoebaDB:DDB_G0295711"/>
<dbReference type="eggNOG" id="KOG0934">
    <property type="taxonomic scope" value="Eukaryota"/>
</dbReference>
<dbReference type="HOGENOM" id="CLU_061221_1_3_1"/>
<dbReference type="InParanoid" id="B0G185"/>
<dbReference type="OMA" id="KAYHILD"/>
<dbReference type="PhylomeDB" id="B0G185"/>
<dbReference type="Reactome" id="R-DDI-432720">
    <property type="pathway name" value="Lysosome Vesicle Biogenesis"/>
</dbReference>
<dbReference type="PRO" id="PR:B0G185"/>
<dbReference type="Proteomes" id="UP000002195">
    <property type="component" value="Chromosome 6"/>
</dbReference>
<dbReference type="GO" id="GO:0030121">
    <property type="term" value="C:AP-1 adaptor complex"/>
    <property type="evidence" value="ECO:0007669"/>
    <property type="project" value="InterPro"/>
</dbReference>
<dbReference type="GO" id="GO:0043231">
    <property type="term" value="C:intracellular membrane-bounded organelle"/>
    <property type="evidence" value="ECO:0000318"/>
    <property type="project" value="GO_Central"/>
</dbReference>
<dbReference type="GO" id="GO:0035615">
    <property type="term" value="F:clathrin adaptor activity"/>
    <property type="evidence" value="ECO:0007669"/>
    <property type="project" value="InterPro"/>
</dbReference>
<dbReference type="GO" id="GO:0015031">
    <property type="term" value="P:protein transport"/>
    <property type="evidence" value="ECO:0007669"/>
    <property type="project" value="UniProtKB-KW"/>
</dbReference>
<dbReference type="GO" id="GO:0016192">
    <property type="term" value="P:vesicle-mediated transport"/>
    <property type="evidence" value="ECO:0000318"/>
    <property type="project" value="GO_Central"/>
</dbReference>
<dbReference type="CDD" id="cd14831">
    <property type="entry name" value="AP1_sigma"/>
    <property type="match status" value="1"/>
</dbReference>
<dbReference type="FunFam" id="3.30.450.60:FF:000007">
    <property type="entry name" value="AP complex subunit sigma"/>
    <property type="match status" value="1"/>
</dbReference>
<dbReference type="Gene3D" id="3.30.450.60">
    <property type="match status" value="1"/>
</dbReference>
<dbReference type="InterPro" id="IPR044733">
    <property type="entry name" value="AP1_sigma"/>
</dbReference>
<dbReference type="InterPro" id="IPR016635">
    <property type="entry name" value="AP_complex_ssu"/>
</dbReference>
<dbReference type="InterPro" id="IPR022775">
    <property type="entry name" value="AP_mu_sigma_su"/>
</dbReference>
<dbReference type="InterPro" id="IPR011012">
    <property type="entry name" value="Longin-like_dom_sf"/>
</dbReference>
<dbReference type="PANTHER" id="PTHR11753">
    <property type="entry name" value="ADAPTOR COMPLEXES SMALL SUBUNIT FAMILY"/>
    <property type="match status" value="1"/>
</dbReference>
<dbReference type="Pfam" id="PF01217">
    <property type="entry name" value="Clat_adaptor_s"/>
    <property type="match status" value="1"/>
</dbReference>
<dbReference type="PIRSF" id="PIRSF015588">
    <property type="entry name" value="AP_complex_sigma"/>
    <property type="match status" value="1"/>
</dbReference>
<dbReference type="SUPFAM" id="SSF64356">
    <property type="entry name" value="SNARE-like"/>
    <property type="match status" value="1"/>
</dbReference>
<evidence type="ECO:0000250" key="1"/>
<evidence type="ECO:0000305" key="2"/>
<name>AP1S2_DICDI</name>
<keyword id="KW-0968">Cytoplasmic vesicle</keyword>
<keyword id="KW-0333">Golgi apparatus</keyword>
<keyword id="KW-0472">Membrane</keyword>
<keyword id="KW-0653">Protein transport</keyword>
<keyword id="KW-1185">Reference proteome</keyword>
<keyword id="KW-0813">Transport</keyword>
<proteinExistence type="inferred from homology"/>
<organism>
    <name type="scientific">Dictyostelium discoideum</name>
    <name type="common">Social amoeba</name>
    <dbReference type="NCBI Taxonomy" id="44689"/>
    <lineage>
        <taxon>Eukaryota</taxon>
        <taxon>Amoebozoa</taxon>
        <taxon>Evosea</taxon>
        <taxon>Eumycetozoa</taxon>
        <taxon>Dictyostelia</taxon>
        <taxon>Dictyosteliales</taxon>
        <taxon>Dictyosteliaceae</taxon>
        <taxon>Dictyostelium</taxon>
    </lineage>
</organism>
<accession>B0G185</accession>
<gene>
    <name type="primary">ap1s2</name>
    <name type="ORF">DDB_G0295711</name>
</gene>
<protein>
    <recommendedName>
        <fullName>AP-1 complex subunit sigma-2</fullName>
    </recommendedName>
    <alternativeName>
        <fullName>Adaptor protein complex AP-1 subunit sigma-1B</fullName>
    </alternativeName>
    <alternativeName>
        <fullName>Adaptor-related protein complex 1 subunit sigma-1B</fullName>
    </alternativeName>
    <alternativeName>
        <fullName>Clathrin assembly protein complex 1 sigma-1B small chain</fullName>
    </alternativeName>
    <alternativeName>
        <fullName>Sigma 1B subunit of AP-1 clathrin</fullName>
    </alternativeName>
    <alternativeName>
        <fullName>Sigma-adaptin 1B</fullName>
    </alternativeName>
    <alternativeName>
        <fullName>Sigma1B-adaptin</fullName>
    </alternativeName>
</protein>
<reference key="1">
    <citation type="journal article" date="2005" name="Nature">
        <title>The genome of the social amoeba Dictyostelium discoideum.</title>
        <authorList>
            <person name="Eichinger L."/>
            <person name="Pachebat J.A."/>
            <person name="Gloeckner G."/>
            <person name="Rajandream M.A."/>
            <person name="Sucgang R."/>
            <person name="Berriman M."/>
            <person name="Song J."/>
            <person name="Olsen R."/>
            <person name="Szafranski K."/>
            <person name="Xu Q."/>
            <person name="Tunggal B."/>
            <person name="Kummerfeld S."/>
            <person name="Madera M."/>
            <person name="Konfortov B.A."/>
            <person name="Rivero F."/>
            <person name="Bankier A.T."/>
            <person name="Lehmann R."/>
            <person name="Hamlin N."/>
            <person name="Davies R."/>
            <person name="Gaudet P."/>
            <person name="Fey P."/>
            <person name="Pilcher K."/>
            <person name="Chen G."/>
            <person name="Saunders D."/>
            <person name="Sodergren E.J."/>
            <person name="Davis P."/>
            <person name="Kerhornou A."/>
            <person name="Nie X."/>
            <person name="Hall N."/>
            <person name="Anjard C."/>
            <person name="Hemphill L."/>
            <person name="Bason N."/>
            <person name="Farbrother P."/>
            <person name="Desany B."/>
            <person name="Just E."/>
            <person name="Morio T."/>
            <person name="Rost R."/>
            <person name="Churcher C.M."/>
            <person name="Cooper J."/>
            <person name="Haydock S."/>
            <person name="van Driessche N."/>
            <person name="Cronin A."/>
            <person name="Goodhead I."/>
            <person name="Muzny D.M."/>
            <person name="Mourier T."/>
            <person name="Pain A."/>
            <person name="Lu M."/>
            <person name="Harper D."/>
            <person name="Lindsay R."/>
            <person name="Hauser H."/>
            <person name="James K.D."/>
            <person name="Quiles M."/>
            <person name="Madan Babu M."/>
            <person name="Saito T."/>
            <person name="Buchrieser C."/>
            <person name="Wardroper A."/>
            <person name="Felder M."/>
            <person name="Thangavelu M."/>
            <person name="Johnson D."/>
            <person name="Knights A."/>
            <person name="Loulseged H."/>
            <person name="Mungall K.L."/>
            <person name="Oliver K."/>
            <person name="Price C."/>
            <person name="Quail M.A."/>
            <person name="Urushihara H."/>
            <person name="Hernandez J."/>
            <person name="Rabbinowitsch E."/>
            <person name="Steffen D."/>
            <person name="Sanders M."/>
            <person name="Ma J."/>
            <person name="Kohara Y."/>
            <person name="Sharp S."/>
            <person name="Simmonds M.N."/>
            <person name="Spiegler S."/>
            <person name="Tivey A."/>
            <person name="Sugano S."/>
            <person name="White B."/>
            <person name="Walker D."/>
            <person name="Woodward J.R."/>
            <person name="Winckler T."/>
            <person name="Tanaka Y."/>
            <person name="Shaulsky G."/>
            <person name="Schleicher M."/>
            <person name="Weinstock G.M."/>
            <person name="Rosenthal A."/>
            <person name="Cox E.C."/>
            <person name="Chisholm R.L."/>
            <person name="Gibbs R.A."/>
            <person name="Loomis W.F."/>
            <person name="Platzer M."/>
            <person name="Kay R.R."/>
            <person name="Williams J.G."/>
            <person name="Dear P.H."/>
            <person name="Noegel A.A."/>
            <person name="Barrell B.G."/>
            <person name="Kuspa A."/>
        </authorList>
    </citation>
    <scope>NUCLEOTIDE SEQUENCE [LARGE SCALE GENOMIC DNA]</scope>
    <source>
        <strain>AX4</strain>
    </source>
</reference>
<comment type="function">
    <text>Subunit of clathrin-associated adaptor protein complex 1 that plays a role in protein sorting in the trans-Golgi network (TGN) and endosomes. The AP complexes mediate the recruitment of clathrin to membranes and the recognition of sorting signals within the cytosolic tails of transmembrane cargo molecules. Also involved in early steps of phagocytosis and macropinocytosis.</text>
</comment>
<comment type="subunit">
    <text evidence="1">Adaptor protein complex 1 (AP-1) is a heterotetramer composed of two large adaptins (gamma-type subunit and beta-type subunit), a medium adaptin (mu-type subunit) and a small adaptin (sigma-type subunit).</text>
</comment>
<comment type="subcellular location">
    <subcellularLocation>
        <location>Golgi apparatus</location>
        <location>trans-Golgi network</location>
    </subcellularLocation>
    <subcellularLocation>
        <location evidence="1">Cytoplasmic vesicle</location>
        <location evidence="1">Clathrin-coated vesicle membrane</location>
    </subcellularLocation>
</comment>
<comment type="similarity">
    <text evidence="2">Belongs to the adaptor complexes small subunit family.</text>
</comment>
<sequence length="154" mass="18371">MTFHFLLLLSRQGKTRLTKWYSPFTNKEKSRFTREIGNMVLNRPPKLCNFLEWKEYKIIFKRYASLYFVVCCDREDNELIVLEIIHHFVEILDRYFGNVCELDLIFNFHKAYYILDELIMAGELQETSKKTVLRLISQQDTLLEGGPGEHKVDL</sequence>
<feature type="chain" id="PRO_0000328671" description="AP-1 complex subunit sigma-2">
    <location>
        <begin position="1"/>
        <end position="154"/>
    </location>
</feature>